<reference key="1">
    <citation type="journal article" date="2003" name="Nat. Genet.">
        <title>Comparative analysis of the genome sequences of Bordetella pertussis, Bordetella parapertussis and Bordetella bronchiseptica.</title>
        <authorList>
            <person name="Parkhill J."/>
            <person name="Sebaihia M."/>
            <person name="Preston A."/>
            <person name="Murphy L.D."/>
            <person name="Thomson N.R."/>
            <person name="Harris D.E."/>
            <person name="Holden M.T.G."/>
            <person name="Churcher C.M."/>
            <person name="Bentley S.D."/>
            <person name="Mungall K.L."/>
            <person name="Cerdeno-Tarraga A.-M."/>
            <person name="Temple L."/>
            <person name="James K.D."/>
            <person name="Harris B."/>
            <person name="Quail M.A."/>
            <person name="Achtman M."/>
            <person name="Atkin R."/>
            <person name="Baker S."/>
            <person name="Basham D."/>
            <person name="Bason N."/>
            <person name="Cherevach I."/>
            <person name="Chillingworth T."/>
            <person name="Collins M."/>
            <person name="Cronin A."/>
            <person name="Davis P."/>
            <person name="Doggett J."/>
            <person name="Feltwell T."/>
            <person name="Goble A."/>
            <person name="Hamlin N."/>
            <person name="Hauser H."/>
            <person name="Holroyd S."/>
            <person name="Jagels K."/>
            <person name="Leather S."/>
            <person name="Moule S."/>
            <person name="Norberczak H."/>
            <person name="O'Neil S."/>
            <person name="Ormond D."/>
            <person name="Price C."/>
            <person name="Rabbinowitsch E."/>
            <person name="Rutter S."/>
            <person name="Sanders M."/>
            <person name="Saunders D."/>
            <person name="Seeger K."/>
            <person name="Sharp S."/>
            <person name="Simmonds M."/>
            <person name="Skelton J."/>
            <person name="Squares R."/>
            <person name="Squares S."/>
            <person name="Stevens K."/>
            <person name="Unwin L."/>
            <person name="Whitehead S."/>
            <person name="Barrell B.G."/>
            <person name="Maskell D.J."/>
        </authorList>
    </citation>
    <scope>NUCLEOTIDE SEQUENCE [LARGE SCALE GENOMIC DNA]</scope>
    <source>
        <strain>Tohama I / ATCC BAA-589 / NCTC 13251</strain>
    </source>
</reference>
<gene>
    <name evidence="1" type="primary">dxr</name>
    <name type="ordered locus">BP1425</name>
</gene>
<organism>
    <name type="scientific">Bordetella pertussis (strain Tohama I / ATCC BAA-589 / NCTC 13251)</name>
    <dbReference type="NCBI Taxonomy" id="257313"/>
    <lineage>
        <taxon>Bacteria</taxon>
        <taxon>Pseudomonadati</taxon>
        <taxon>Pseudomonadota</taxon>
        <taxon>Betaproteobacteria</taxon>
        <taxon>Burkholderiales</taxon>
        <taxon>Alcaligenaceae</taxon>
        <taxon>Bordetella</taxon>
    </lineage>
</organism>
<name>DXR_BORPE</name>
<proteinExistence type="inferred from homology"/>
<keyword id="KW-0414">Isoprene biosynthesis</keyword>
<keyword id="KW-0464">Manganese</keyword>
<keyword id="KW-0479">Metal-binding</keyword>
<keyword id="KW-0521">NADP</keyword>
<keyword id="KW-0560">Oxidoreductase</keyword>
<keyword id="KW-1185">Reference proteome</keyword>
<sequence>MTRFQRVAVLGSTGSIGDSTLDVIARHPDRLGVYALSAYSRMDKLAAQAAACGAAVVVVPDDAAAARFRAAWRGKAAMPEVRVGPRALAETAAAPECTTVMAAIVGAAGLPAALAAAQAGKRVLLANKEALVAAGSLFMAAVRENGAELLPIDSEHNAIFQCMPQGARAAAPTAPAPGVRRLLLTASGGPFRRQDPADLHEVTPAQACAHPNWSMGRKISVDSATMLNKGLEVIEAHWLFAMPSERIDVLIHPQSVVHSMVEYDDGSVLAQLGQPDMRTPIAYGLGFPERLASGVGLLDLTRWGRLDFEQPDLQRFPCLALSFAALRAGQPACVALNAANEVAVAAFLEGRLRYTWIARVIEAVLEWQAKQASVTLTSLDDVLDLDARARSFAGNLGLA</sequence>
<evidence type="ECO:0000255" key="1">
    <source>
        <dbReference type="HAMAP-Rule" id="MF_00183"/>
    </source>
</evidence>
<accession>Q7VYC4</accession>
<comment type="function">
    <text evidence="1">Catalyzes the NADPH-dependent rearrangement and reduction of 1-deoxy-D-xylulose-5-phosphate (DXP) to 2-C-methyl-D-erythritol 4-phosphate (MEP).</text>
</comment>
<comment type="catalytic activity">
    <reaction evidence="1">
        <text>2-C-methyl-D-erythritol 4-phosphate + NADP(+) = 1-deoxy-D-xylulose 5-phosphate + NADPH + H(+)</text>
        <dbReference type="Rhea" id="RHEA:13717"/>
        <dbReference type="ChEBI" id="CHEBI:15378"/>
        <dbReference type="ChEBI" id="CHEBI:57783"/>
        <dbReference type="ChEBI" id="CHEBI:57792"/>
        <dbReference type="ChEBI" id="CHEBI:58262"/>
        <dbReference type="ChEBI" id="CHEBI:58349"/>
        <dbReference type="EC" id="1.1.1.267"/>
    </reaction>
    <physiologicalReaction direction="right-to-left" evidence="1">
        <dbReference type="Rhea" id="RHEA:13719"/>
    </physiologicalReaction>
</comment>
<comment type="cofactor">
    <cofactor evidence="1">
        <name>Mg(2+)</name>
        <dbReference type="ChEBI" id="CHEBI:18420"/>
    </cofactor>
    <cofactor evidence="1">
        <name>Mn(2+)</name>
        <dbReference type="ChEBI" id="CHEBI:29035"/>
    </cofactor>
</comment>
<comment type="pathway">
    <text evidence="1">Isoprenoid biosynthesis; isopentenyl diphosphate biosynthesis via DXP pathway; isopentenyl diphosphate from 1-deoxy-D-xylulose 5-phosphate: step 1/6.</text>
</comment>
<comment type="similarity">
    <text evidence="1">Belongs to the DXR family.</text>
</comment>
<dbReference type="EC" id="1.1.1.267" evidence="1"/>
<dbReference type="EMBL" id="BX640415">
    <property type="protein sequence ID" value="CAE41715.1"/>
    <property type="molecule type" value="Genomic_DNA"/>
</dbReference>
<dbReference type="RefSeq" id="NP_880167.1">
    <property type="nucleotide sequence ID" value="NC_002929.2"/>
</dbReference>
<dbReference type="RefSeq" id="WP_003811788.1">
    <property type="nucleotide sequence ID" value="NZ_CP039022.1"/>
</dbReference>
<dbReference type="SMR" id="Q7VYC4"/>
<dbReference type="STRING" id="257313.BP1425"/>
<dbReference type="PaxDb" id="257313-BP1425"/>
<dbReference type="KEGG" id="bpe:BP1425"/>
<dbReference type="PATRIC" id="fig|257313.5.peg.1528"/>
<dbReference type="eggNOG" id="COG0743">
    <property type="taxonomic scope" value="Bacteria"/>
</dbReference>
<dbReference type="HOGENOM" id="CLU_035714_4_0_4"/>
<dbReference type="UniPathway" id="UPA00056">
    <property type="reaction ID" value="UER00092"/>
</dbReference>
<dbReference type="Proteomes" id="UP000002676">
    <property type="component" value="Chromosome"/>
</dbReference>
<dbReference type="GO" id="GO:0030604">
    <property type="term" value="F:1-deoxy-D-xylulose-5-phosphate reductoisomerase activity"/>
    <property type="evidence" value="ECO:0007669"/>
    <property type="project" value="UniProtKB-UniRule"/>
</dbReference>
<dbReference type="GO" id="GO:0030145">
    <property type="term" value="F:manganese ion binding"/>
    <property type="evidence" value="ECO:0007669"/>
    <property type="project" value="TreeGrafter"/>
</dbReference>
<dbReference type="GO" id="GO:0070402">
    <property type="term" value="F:NADPH binding"/>
    <property type="evidence" value="ECO:0007669"/>
    <property type="project" value="InterPro"/>
</dbReference>
<dbReference type="GO" id="GO:0051484">
    <property type="term" value="P:isopentenyl diphosphate biosynthetic process, methylerythritol 4-phosphate pathway involved in terpenoid biosynthetic process"/>
    <property type="evidence" value="ECO:0007669"/>
    <property type="project" value="TreeGrafter"/>
</dbReference>
<dbReference type="FunFam" id="3.40.50.720:FF:000045">
    <property type="entry name" value="1-deoxy-D-xylulose 5-phosphate reductoisomerase"/>
    <property type="match status" value="1"/>
</dbReference>
<dbReference type="Gene3D" id="1.10.1740.10">
    <property type="match status" value="1"/>
</dbReference>
<dbReference type="Gene3D" id="3.40.50.720">
    <property type="entry name" value="NAD(P)-binding Rossmann-like Domain"/>
    <property type="match status" value="1"/>
</dbReference>
<dbReference type="HAMAP" id="MF_00183">
    <property type="entry name" value="DXP_reductoisom"/>
    <property type="match status" value="1"/>
</dbReference>
<dbReference type="InterPro" id="IPR003821">
    <property type="entry name" value="DXP_reductoisomerase"/>
</dbReference>
<dbReference type="InterPro" id="IPR013644">
    <property type="entry name" value="DXP_reductoisomerase_C"/>
</dbReference>
<dbReference type="InterPro" id="IPR013512">
    <property type="entry name" value="DXP_reductoisomerase_N"/>
</dbReference>
<dbReference type="InterPro" id="IPR026877">
    <property type="entry name" value="DXPR_C"/>
</dbReference>
<dbReference type="InterPro" id="IPR036169">
    <property type="entry name" value="DXPR_C_sf"/>
</dbReference>
<dbReference type="InterPro" id="IPR036291">
    <property type="entry name" value="NAD(P)-bd_dom_sf"/>
</dbReference>
<dbReference type="NCBIfam" id="TIGR00243">
    <property type="entry name" value="Dxr"/>
    <property type="match status" value="1"/>
</dbReference>
<dbReference type="NCBIfam" id="NF009114">
    <property type="entry name" value="PRK12464.1"/>
    <property type="match status" value="1"/>
</dbReference>
<dbReference type="PANTHER" id="PTHR30525">
    <property type="entry name" value="1-DEOXY-D-XYLULOSE 5-PHOSPHATE REDUCTOISOMERASE"/>
    <property type="match status" value="1"/>
</dbReference>
<dbReference type="PANTHER" id="PTHR30525:SF0">
    <property type="entry name" value="1-DEOXY-D-XYLULOSE 5-PHOSPHATE REDUCTOISOMERASE, CHLOROPLASTIC"/>
    <property type="match status" value="1"/>
</dbReference>
<dbReference type="Pfam" id="PF08436">
    <property type="entry name" value="DXP_redisom_C"/>
    <property type="match status" value="1"/>
</dbReference>
<dbReference type="Pfam" id="PF02670">
    <property type="entry name" value="DXP_reductoisom"/>
    <property type="match status" value="1"/>
</dbReference>
<dbReference type="Pfam" id="PF13288">
    <property type="entry name" value="DXPR_C"/>
    <property type="match status" value="1"/>
</dbReference>
<dbReference type="PIRSF" id="PIRSF006205">
    <property type="entry name" value="Dxp_reductismrs"/>
    <property type="match status" value="1"/>
</dbReference>
<dbReference type="SUPFAM" id="SSF69055">
    <property type="entry name" value="1-deoxy-D-xylulose-5-phosphate reductoisomerase, C-terminal domain"/>
    <property type="match status" value="1"/>
</dbReference>
<dbReference type="SUPFAM" id="SSF55347">
    <property type="entry name" value="Glyceraldehyde-3-phosphate dehydrogenase-like, C-terminal domain"/>
    <property type="match status" value="1"/>
</dbReference>
<dbReference type="SUPFAM" id="SSF51735">
    <property type="entry name" value="NAD(P)-binding Rossmann-fold domains"/>
    <property type="match status" value="1"/>
</dbReference>
<protein>
    <recommendedName>
        <fullName evidence="1">1-deoxy-D-xylulose 5-phosphate reductoisomerase</fullName>
        <shortName evidence="1">DXP reductoisomerase</shortName>
        <ecNumber evidence="1">1.1.1.267</ecNumber>
    </recommendedName>
    <alternativeName>
        <fullName evidence="1">1-deoxyxylulose-5-phosphate reductoisomerase</fullName>
    </alternativeName>
    <alternativeName>
        <fullName evidence="1">2-C-methyl-D-erythritol 4-phosphate synthase</fullName>
    </alternativeName>
</protein>
<feature type="chain" id="PRO_0000163620" description="1-deoxy-D-xylulose 5-phosphate reductoisomerase">
    <location>
        <begin position="1"/>
        <end position="399"/>
    </location>
</feature>
<feature type="binding site" evidence="1">
    <location>
        <position position="13"/>
    </location>
    <ligand>
        <name>NADPH</name>
        <dbReference type="ChEBI" id="CHEBI:57783"/>
    </ligand>
</feature>
<feature type="binding site" evidence="1">
    <location>
        <position position="14"/>
    </location>
    <ligand>
        <name>NADPH</name>
        <dbReference type="ChEBI" id="CHEBI:57783"/>
    </ligand>
</feature>
<feature type="binding site" evidence="1">
    <location>
        <position position="15"/>
    </location>
    <ligand>
        <name>NADPH</name>
        <dbReference type="ChEBI" id="CHEBI:57783"/>
    </ligand>
</feature>
<feature type="binding site" evidence="1">
    <location>
        <position position="16"/>
    </location>
    <ligand>
        <name>NADPH</name>
        <dbReference type="ChEBI" id="CHEBI:57783"/>
    </ligand>
</feature>
<feature type="binding site" evidence="1">
    <location>
        <position position="127"/>
    </location>
    <ligand>
        <name>NADPH</name>
        <dbReference type="ChEBI" id="CHEBI:57783"/>
    </ligand>
</feature>
<feature type="binding site" evidence="1">
    <location>
        <position position="128"/>
    </location>
    <ligand>
        <name>1-deoxy-D-xylulose 5-phosphate</name>
        <dbReference type="ChEBI" id="CHEBI:57792"/>
    </ligand>
</feature>
<feature type="binding site" evidence="1">
    <location>
        <position position="129"/>
    </location>
    <ligand>
        <name>NADPH</name>
        <dbReference type="ChEBI" id="CHEBI:57783"/>
    </ligand>
</feature>
<feature type="binding site" evidence="1">
    <location>
        <position position="153"/>
    </location>
    <ligand>
        <name>Mn(2+)</name>
        <dbReference type="ChEBI" id="CHEBI:29035"/>
    </ligand>
</feature>
<feature type="binding site" evidence="1">
    <location>
        <position position="154"/>
    </location>
    <ligand>
        <name>1-deoxy-D-xylulose 5-phosphate</name>
        <dbReference type="ChEBI" id="CHEBI:57792"/>
    </ligand>
</feature>
<feature type="binding site" evidence="1">
    <location>
        <position position="155"/>
    </location>
    <ligand>
        <name>1-deoxy-D-xylulose 5-phosphate</name>
        <dbReference type="ChEBI" id="CHEBI:57792"/>
    </ligand>
</feature>
<feature type="binding site" evidence="1">
    <location>
        <position position="155"/>
    </location>
    <ligand>
        <name>Mn(2+)</name>
        <dbReference type="ChEBI" id="CHEBI:29035"/>
    </ligand>
</feature>
<feature type="binding site" evidence="1">
    <location>
        <position position="187"/>
    </location>
    <ligand>
        <name>1-deoxy-D-xylulose 5-phosphate</name>
        <dbReference type="ChEBI" id="CHEBI:57792"/>
    </ligand>
</feature>
<feature type="binding site" evidence="1">
    <location>
        <position position="210"/>
    </location>
    <ligand>
        <name>1-deoxy-D-xylulose 5-phosphate</name>
        <dbReference type="ChEBI" id="CHEBI:57792"/>
    </ligand>
</feature>
<feature type="binding site" evidence="1">
    <location>
        <position position="216"/>
    </location>
    <ligand>
        <name>NADPH</name>
        <dbReference type="ChEBI" id="CHEBI:57783"/>
    </ligand>
</feature>
<feature type="binding site" evidence="1">
    <location>
        <position position="223"/>
    </location>
    <ligand>
        <name>1-deoxy-D-xylulose 5-phosphate</name>
        <dbReference type="ChEBI" id="CHEBI:57792"/>
    </ligand>
</feature>
<feature type="binding site" evidence="1">
    <location>
        <position position="228"/>
    </location>
    <ligand>
        <name>1-deoxy-D-xylulose 5-phosphate</name>
        <dbReference type="ChEBI" id="CHEBI:57792"/>
    </ligand>
</feature>
<feature type="binding site" evidence="1">
    <location>
        <position position="229"/>
    </location>
    <ligand>
        <name>1-deoxy-D-xylulose 5-phosphate</name>
        <dbReference type="ChEBI" id="CHEBI:57792"/>
    </ligand>
</feature>
<feature type="binding site" evidence="1">
    <location>
        <position position="232"/>
    </location>
    <ligand>
        <name>1-deoxy-D-xylulose 5-phosphate</name>
        <dbReference type="ChEBI" id="CHEBI:57792"/>
    </ligand>
</feature>
<feature type="binding site" evidence="1">
    <location>
        <position position="232"/>
    </location>
    <ligand>
        <name>Mn(2+)</name>
        <dbReference type="ChEBI" id="CHEBI:29035"/>
    </ligand>
</feature>